<dbReference type="EC" id="6.1.1.10" evidence="1"/>
<dbReference type="EMBL" id="CP001598">
    <property type="protein sequence ID" value="ACQ48356.1"/>
    <property type="molecule type" value="Genomic_DNA"/>
</dbReference>
<dbReference type="RefSeq" id="WP_000021567.1">
    <property type="nucleotide sequence ID" value="NC_012659.1"/>
</dbReference>
<dbReference type="SMR" id="C3P025"/>
<dbReference type="GeneID" id="45024892"/>
<dbReference type="KEGG" id="bai:BAA_5309"/>
<dbReference type="HOGENOM" id="CLU_009710_1_2_9"/>
<dbReference type="GO" id="GO:0005829">
    <property type="term" value="C:cytosol"/>
    <property type="evidence" value="ECO:0007669"/>
    <property type="project" value="TreeGrafter"/>
</dbReference>
<dbReference type="GO" id="GO:0005524">
    <property type="term" value="F:ATP binding"/>
    <property type="evidence" value="ECO:0007669"/>
    <property type="project" value="UniProtKB-UniRule"/>
</dbReference>
<dbReference type="GO" id="GO:0046872">
    <property type="term" value="F:metal ion binding"/>
    <property type="evidence" value="ECO:0007669"/>
    <property type="project" value="UniProtKB-KW"/>
</dbReference>
<dbReference type="GO" id="GO:0004825">
    <property type="term" value="F:methionine-tRNA ligase activity"/>
    <property type="evidence" value="ECO:0007669"/>
    <property type="project" value="UniProtKB-UniRule"/>
</dbReference>
<dbReference type="GO" id="GO:0006431">
    <property type="term" value="P:methionyl-tRNA aminoacylation"/>
    <property type="evidence" value="ECO:0007669"/>
    <property type="project" value="UniProtKB-UniRule"/>
</dbReference>
<dbReference type="CDD" id="cd07957">
    <property type="entry name" value="Anticodon_Ia_Met"/>
    <property type="match status" value="1"/>
</dbReference>
<dbReference type="CDD" id="cd00814">
    <property type="entry name" value="MetRS_core"/>
    <property type="match status" value="1"/>
</dbReference>
<dbReference type="FunFam" id="1.10.730.10:FF:000041">
    <property type="entry name" value="Methionine--tRNA ligase"/>
    <property type="match status" value="1"/>
</dbReference>
<dbReference type="FunFam" id="2.20.28.20:FF:000001">
    <property type="entry name" value="Methionine--tRNA ligase"/>
    <property type="match status" value="1"/>
</dbReference>
<dbReference type="Gene3D" id="3.40.50.620">
    <property type="entry name" value="HUPs"/>
    <property type="match status" value="1"/>
</dbReference>
<dbReference type="Gene3D" id="1.10.730.10">
    <property type="entry name" value="Isoleucyl-tRNA Synthetase, Domain 1"/>
    <property type="match status" value="1"/>
</dbReference>
<dbReference type="Gene3D" id="2.20.28.20">
    <property type="entry name" value="Methionyl-tRNA synthetase, Zn-domain"/>
    <property type="match status" value="1"/>
</dbReference>
<dbReference type="HAMAP" id="MF_00098">
    <property type="entry name" value="Met_tRNA_synth_type1"/>
    <property type="match status" value="1"/>
</dbReference>
<dbReference type="InterPro" id="IPR001412">
    <property type="entry name" value="aa-tRNA-synth_I_CS"/>
</dbReference>
<dbReference type="InterPro" id="IPR041872">
    <property type="entry name" value="Anticodon_Met"/>
</dbReference>
<dbReference type="InterPro" id="IPR023458">
    <property type="entry name" value="Met-tRNA_ligase_1"/>
</dbReference>
<dbReference type="InterPro" id="IPR014758">
    <property type="entry name" value="Met-tRNA_synth"/>
</dbReference>
<dbReference type="InterPro" id="IPR015413">
    <property type="entry name" value="Methionyl/Leucyl_tRNA_Synth"/>
</dbReference>
<dbReference type="InterPro" id="IPR033911">
    <property type="entry name" value="MetRS_core"/>
</dbReference>
<dbReference type="InterPro" id="IPR029038">
    <property type="entry name" value="MetRS_Zn"/>
</dbReference>
<dbReference type="InterPro" id="IPR014729">
    <property type="entry name" value="Rossmann-like_a/b/a_fold"/>
</dbReference>
<dbReference type="InterPro" id="IPR009080">
    <property type="entry name" value="tRNAsynth_Ia_anticodon-bd"/>
</dbReference>
<dbReference type="NCBIfam" id="TIGR00398">
    <property type="entry name" value="metG"/>
    <property type="match status" value="1"/>
</dbReference>
<dbReference type="PANTHER" id="PTHR45765">
    <property type="entry name" value="METHIONINE--TRNA LIGASE"/>
    <property type="match status" value="1"/>
</dbReference>
<dbReference type="PANTHER" id="PTHR45765:SF1">
    <property type="entry name" value="METHIONINE--TRNA LIGASE, CYTOPLASMIC"/>
    <property type="match status" value="1"/>
</dbReference>
<dbReference type="Pfam" id="PF19303">
    <property type="entry name" value="Anticodon_3"/>
    <property type="match status" value="1"/>
</dbReference>
<dbReference type="Pfam" id="PF09334">
    <property type="entry name" value="tRNA-synt_1g"/>
    <property type="match status" value="1"/>
</dbReference>
<dbReference type="PRINTS" id="PR01041">
    <property type="entry name" value="TRNASYNTHMET"/>
</dbReference>
<dbReference type="SUPFAM" id="SSF47323">
    <property type="entry name" value="Anticodon-binding domain of a subclass of class I aminoacyl-tRNA synthetases"/>
    <property type="match status" value="1"/>
</dbReference>
<dbReference type="SUPFAM" id="SSF57770">
    <property type="entry name" value="Methionyl-tRNA synthetase (MetRS), Zn-domain"/>
    <property type="match status" value="1"/>
</dbReference>
<dbReference type="SUPFAM" id="SSF52374">
    <property type="entry name" value="Nucleotidylyl transferase"/>
    <property type="match status" value="1"/>
</dbReference>
<dbReference type="PROSITE" id="PS00178">
    <property type="entry name" value="AA_TRNA_LIGASE_I"/>
    <property type="match status" value="1"/>
</dbReference>
<proteinExistence type="inferred from homology"/>
<evidence type="ECO:0000255" key="1">
    <source>
        <dbReference type="HAMAP-Rule" id="MF_00098"/>
    </source>
</evidence>
<accession>C3P025</accession>
<protein>
    <recommendedName>
        <fullName evidence="1">Methionine--tRNA ligase</fullName>
        <ecNumber evidence="1">6.1.1.10</ecNumber>
    </recommendedName>
    <alternativeName>
        <fullName evidence="1">Methionyl-tRNA synthetase</fullName>
        <shortName evidence="1">MetRS</shortName>
    </alternativeName>
</protein>
<comment type="function">
    <text evidence="1">Is required not only for elongation of protein synthesis but also for the initiation of all mRNA translation through initiator tRNA(fMet) aminoacylation.</text>
</comment>
<comment type="catalytic activity">
    <reaction evidence="1">
        <text>tRNA(Met) + L-methionine + ATP = L-methionyl-tRNA(Met) + AMP + diphosphate</text>
        <dbReference type="Rhea" id="RHEA:13481"/>
        <dbReference type="Rhea" id="RHEA-COMP:9667"/>
        <dbReference type="Rhea" id="RHEA-COMP:9698"/>
        <dbReference type="ChEBI" id="CHEBI:30616"/>
        <dbReference type="ChEBI" id="CHEBI:33019"/>
        <dbReference type="ChEBI" id="CHEBI:57844"/>
        <dbReference type="ChEBI" id="CHEBI:78442"/>
        <dbReference type="ChEBI" id="CHEBI:78530"/>
        <dbReference type="ChEBI" id="CHEBI:456215"/>
        <dbReference type="EC" id="6.1.1.10"/>
    </reaction>
</comment>
<comment type="cofactor">
    <cofactor evidence="1">
        <name>Zn(2+)</name>
        <dbReference type="ChEBI" id="CHEBI:29105"/>
    </cofactor>
    <text evidence="1">Binds 1 zinc ion per subunit.</text>
</comment>
<comment type="subunit">
    <text evidence="1">Monomer.</text>
</comment>
<comment type="subcellular location">
    <subcellularLocation>
        <location evidence="1">Cytoplasm</location>
    </subcellularLocation>
</comment>
<comment type="similarity">
    <text evidence="1">Belongs to the class-I aminoacyl-tRNA synthetase family. MetG type 1 subfamily.</text>
</comment>
<organism>
    <name type="scientific">Bacillus anthracis (strain A0248)</name>
    <dbReference type="NCBI Taxonomy" id="592021"/>
    <lineage>
        <taxon>Bacteria</taxon>
        <taxon>Bacillati</taxon>
        <taxon>Bacillota</taxon>
        <taxon>Bacilli</taxon>
        <taxon>Bacillales</taxon>
        <taxon>Bacillaceae</taxon>
        <taxon>Bacillus</taxon>
        <taxon>Bacillus cereus group</taxon>
    </lineage>
</organism>
<feature type="chain" id="PRO_1000199270" description="Methionine--tRNA ligase">
    <location>
        <begin position="1"/>
        <end position="544"/>
    </location>
</feature>
<feature type="short sequence motif" description="'HIGH' region">
    <location>
        <begin position="10"/>
        <end position="20"/>
    </location>
</feature>
<feature type="short sequence motif" description="'KMSKS' region">
    <location>
        <begin position="329"/>
        <end position="333"/>
    </location>
</feature>
<feature type="binding site" evidence="1">
    <location>
        <position position="141"/>
    </location>
    <ligand>
        <name>Zn(2+)</name>
        <dbReference type="ChEBI" id="CHEBI:29105"/>
    </ligand>
</feature>
<feature type="binding site" evidence="1">
    <location>
        <position position="144"/>
    </location>
    <ligand>
        <name>Zn(2+)</name>
        <dbReference type="ChEBI" id="CHEBI:29105"/>
    </ligand>
</feature>
<feature type="binding site" evidence="1">
    <location>
        <position position="153"/>
    </location>
    <ligand>
        <name>Zn(2+)</name>
        <dbReference type="ChEBI" id="CHEBI:29105"/>
    </ligand>
</feature>
<feature type="binding site" evidence="1">
    <location>
        <position position="156"/>
    </location>
    <ligand>
        <name>Zn(2+)</name>
        <dbReference type="ChEBI" id="CHEBI:29105"/>
    </ligand>
</feature>
<feature type="binding site" evidence="1">
    <location>
        <position position="332"/>
    </location>
    <ligand>
        <name>ATP</name>
        <dbReference type="ChEBI" id="CHEBI:30616"/>
    </ligand>
</feature>
<reference key="1">
    <citation type="submission" date="2009-04" db="EMBL/GenBank/DDBJ databases">
        <title>Genome sequence of Bacillus anthracis A0248.</title>
        <authorList>
            <person name="Dodson R.J."/>
            <person name="Munk A.C."/>
            <person name="Bruce D."/>
            <person name="Detter C."/>
            <person name="Tapia R."/>
            <person name="Sutton G."/>
            <person name="Sims D."/>
            <person name="Brettin T."/>
        </authorList>
    </citation>
    <scope>NUCLEOTIDE SEQUENCE [LARGE SCALE GENOMIC DNA]</scope>
    <source>
        <strain>A0248</strain>
    </source>
</reference>
<name>SYM_BACAA</name>
<sequence length="544" mass="62879">MSIFIGGAWPYANGSLHLGHIASLLPGDILARYYRAKGENVLYVSGSDCNGTPIAIRAKQEGVTAKEIANKYHEEFERCFRNLGFTYDCYTRTDSEHHHETVQNVFLRLLEEGHIYKKTVEQAYCETCTQFLPDCYVEGVCPHCHEEARGDQCDACSAILDPLDLLEKKCKLCGSTPSIQETEHFYFALHTFQEQIKRAVEIAKQTGTWRDNAIQLTERYVKEGLLDRAVSRDLPIGVPIPVEGYEDKKIYVWIEAVTGYYSASKHWAEETGKDDREFWDGEAKTYYVHGKDNIPFHSVIWPAVLLGIGEGTIPRHIVSNEYLTVEKRKLSTSKNWAVWVPDILERYDPDSIRYFLIVNAPENRDTDFSWREFIYSHNSELLGAYGNFVNRTLKFIEKYYGGIMPKGSIDVELKDKIERLYKHVGEAIEQTKFKVALESIFDAVRFANKYFDERQPWKEREDDPVSCEETIYNCVYLIANFANLLEPFLPFSSERIRNTLSIVNRNWEPQHTLPSRIDSVQPLFERIDVKQIECELEKLYGAVK</sequence>
<gene>
    <name evidence="1" type="primary">metG</name>
    <name type="ordered locus">BAA_5309</name>
</gene>
<keyword id="KW-0030">Aminoacyl-tRNA synthetase</keyword>
<keyword id="KW-0067">ATP-binding</keyword>
<keyword id="KW-0963">Cytoplasm</keyword>
<keyword id="KW-0436">Ligase</keyword>
<keyword id="KW-0479">Metal-binding</keyword>
<keyword id="KW-0547">Nucleotide-binding</keyword>
<keyword id="KW-0648">Protein biosynthesis</keyword>
<keyword id="KW-0862">Zinc</keyword>